<accession>B0TRE7</accession>
<evidence type="ECO:0000255" key="1">
    <source>
        <dbReference type="HAMAP-Rule" id="MF_01635"/>
    </source>
</evidence>
<name>UBIA_SHEHH</name>
<dbReference type="EC" id="2.5.1.39" evidence="1"/>
<dbReference type="EMBL" id="CP000931">
    <property type="protein sequence ID" value="ABZ75119.1"/>
    <property type="molecule type" value="Genomic_DNA"/>
</dbReference>
<dbReference type="RefSeq" id="WP_012275673.1">
    <property type="nucleotide sequence ID" value="NC_010334.1"/>
</dbReference>
<dbReference type="SMR" id="B0TRE7"/>
<dbReference type="STRING" id="458817.Shal_0544"/>
<dbReference type="KEGG" id="shl:Shal_0544"/>
<dbReference type="eggNOG" id="COG0382">
    <property type="taxonomic scope" value="Bacteria"/>
</dbReference>
<dbReference type="HOGENOM" id="CLU_034879_1_0_6"/>
<dbReference type="OrthoDB" id="9782418at2"/>
<dbReference type="UniPathway" id="UPA00232"/>
<dbReference type="Proteomes" id="UP000001317">
    <property type="component" value="Chromosome"/>
</dbReference>
<dbReference type="GO" id="GO:0005886">
    <property type="term" value="C:plasma membrane"/>
    <property type="evidence" value="ECO:0007669"/>
    <property type="project" value="UniProtKB-SubCell"/>
</dbReference>
<dbReference type="GO" id="GO:0008412">
    <property type="term" value="F:4-hydroxybenzoate polyprenyltransferase activity"/>
    <property type="evidence" value="ECO:0007669"/>
    <property type="project" value="UniProtKB-UniRule"/>
</dbReference>
<dbReference type="GO" id="GO:0006744">
    <property type="term" value="P:ubiquinone biosynthetic process"/>
    <property type="evidence" value="ECO:0007669"/>
    <property type="project" value="UniProtKB-UniRule"/>
</dbReference>
<dbReference type="CDD" id="cd13959">
    <property type="entry name" value="PT_UbiA_COQ2"/>
    <property type="match status" value="1"/>
</dbReference>
<dbReference type="FunFam" id="1.10.357.140:FF:000002">
    <property type="entry name" value="4-hydroxybenzoate octaprenyltransferase"/>
    <property type="match status" value="1"/>
</dbReference>
<dbReference type="FunFam" id="1.20.120.1780:FF:000001">
    <property type="entry name" value="4-hydroxybenzoate octaprenyltransferase"/>
    <property type="match status" value="1"/>
</dbReference>
<dbReference type="Gene3D" id="1.10.357.140">
    <property type="entry name" value="UbiA prenyltransferase"/>
    <property type="match status" value="1"/>
</dbReference>
<dbReference type="Gene3D" id="1.20.120.1780">
    <property type="entry name" value="UbiA prenyltransferase"/>
    <property type="match status" value="1"/>
</dbReference>
<dbReference type="HAMAP" id="MF_01635">
    <property type="entry name" value="UbiA"/>
    <property type="match status" value="1"/>
</dbReference>
<dbReference type="InterPro" id="IPR006370">
    <property type="entry name" value="HB_polyprenyltransferase-like"/>
</dbReference>
<dbReference type="InterPro" id="IPR039653">
    <property type="entry name" value="Prenyltransferase"/>
</dbReference>
<dbReference type="InterPro" id="IPR000537">
    <property type="entry name" value="UbiA_prenyltransferase"/>
</dbReference>
<dbReference type="InterPro" id="IPR030470">
    <property type="entry name" value="UbiA_prenylTrfase_CS"/>
</dbReference>
<dbReference type="InterPro" id="IPR044878">
    <property type="entry name" value="UbiA_sf"/>
</dbReference>
<dbReference type="NCBIfam" id="TIGR01474">
    <property type="entry name" value="ubiA_proteo"/>
    <property type="match status" value="1"/>
</dbReference>
<dbReference type="PANTHER" id="PTHR11048:SF28">
    <property type="entry name" value="4-HYDROXYBENZOATE POLYPRENYLTRANSFERASE, MITOCHONDRIAL"/>
    <property type="match status" value="1"/>
</dbReference>
<dbReference type="PANTHER" id="PTHR11048">
    <property type="entry name" value="PRENYLTRANSFERASES"/>
    <property type="match status" value="1"/>
</dbReference>
<dbReference type="Pfam" id="PF01040">
    <property type="entry name" value="UbiA"/>
    <property type="match status" value="1"/>
</dbReference>
<dbReference type="PROSITE" id="PS00943">
    <property type="entry name" value="UBIA"/>
    <property type="match status" value="1"/>
</dbReference>
<reference key="1">
    <citation type="submission" date="2008-01" db="EMBL/GenBank/DDBJ databases">
        <title>Complete sequence of Shewanella halifaxensis HAW-EB4.</title>
        <authorList>
            <consortium name="US DOE Joint Genome Institute"/>
            <person name="Copeland A."/>
            <person name="Lucas S."/>
            <person name="Lapidus A."/>
            <person name="Glavina del Rio T."/>
            <person name="Dalin E."/>
            <person name="Tice H."/>
            <person name="Bruce D."/>
            <person name="Goodwin L."/>
            <person name="Pitluck S."/>
            <person name="Sims D."/>
            <person name="Brettin T."/>
            <person name="Detter J.C."/>
            <person name="Han C."/>
            <person name="Kuske C.R."/>
            <person name="Schmutz J."/>
            <person name="Larimer F."/>
            <person name="Land M."/>
            <person name="Hauser L."/>
            <person name="Kyrpides N."/>
            <person name="Kim E."/>
            <person name="Zhao J.-S."/>
            <person name="Richardson P."/>
        </authorList>
    </citation>
    <scope>NUCLEOTIDE SEQUENCE [LARGE SCALE GENOMIC DNA]</scope>
    <source>
        <strain>HAW-EB4</strain>
    </source>
</reference>
<keyword id="KW-0997">Cell inner membrane</keyword>
<keyword id="KW-1003">Cell membrane</keyword>
<keyword id="KW-0460">Magnesium</keyword>
<keyword id="KW-0472">Membrane</keyword>
<keyword id="KW-0808">Transferase</keyword>
<keyword id="KW-0812">Transmembrane</keyword>
<keyword id="KW-1133">Transmembrane helix</keyword>
<keyword id="KW-0831">Ubiquinone biosynthesis</keyword>
<gene>
    <name evidence="1" type="primary">ubiA</name>
    <name type="ordered locus">Shal_0544</name>
</gene>
<sequence length="287" mass="32132">MSFRDKLDVYMRLARMDRPIGTLLLLWPCLMALTFAAGGLPDLKVFIIFVIGVVVMRACGCIINDYADRDLDSHVERTKARPLASGEISSKEALLLFGVMGLFAFSLVLMLNPLVVQLSVVGIILTIIYPFTKRYTNMPQMFLGTVWSWSIPMAYAAQTGTVPIEAWWLFAANWCWTVAYDTMYAMVDRDDDLKVGIKSTAILFGRYDRQIIAAFQLAALSCFIIAGMLAGRGEIYGLGILAFIGFAVYQQKLIYGRERGPCFTAFLNNNWAGMVLYIALTLDYLIL</sequence>
<feature type="chain" id="PRO_1000088183" description="4-hydroxybenzoate octaprenyltransferase">
    <location>
        <begin position="1"/>
        <end position="287"/>
    </location>
</feature>
<feature type="transmembrane region" description="Helical" evidence="1">
    <location>
        <begin position="35"/>
        <end position="55"/>
    </location>
</feature>
<feature type="transmembrane region" description="Helical" evidence="1">
    <location>
        <begin position="96"/>
        <end position="116"/>
    </location>
</feature>
<feature type="transmembrane region" description="Helical" evidence="1">
    <location>
        <begin position="211"/>
        <end position="231"/>
    </location>
</feature>
<feature type="transmembrane region" description="Helical" evidence="1">
    <location>
        <begin position="235"/>
        <end position="255"/>
    </location>
</feature>
<feature type="transmembrane region" description="Helical" evidence="1">
    <location>
        <begin position="262"/>
        <end position="282"/>
    </location>
</feature>
<protein>
    <recommendedName>
        <fullName evidence="1">4-hydroxybenzoate octaprenyltransferase</fullName>
        <ecNumber evidence="1">2.5.1.39</ecNumber>
    </recommendedName>
    <alternativeName>
        <fullName evidence="1">4-HB polyprenyltransferase</fullName>
    </alternativeName>
</protein>
<proteinExistence type="inferred from homology"/>
<organism>
    <name type="scientific">Shewanella halifaxensis (strain HAW-EB4)</name>
    <dbReference type="NCBI Taxonomy" id="458817"/>
    <lineage>
        <taxon>Bacteria</taxon>
        <taxon>Pseudomonadati</taxon>
        <taxon>Pseudomonadota</taxon>
        <taxon>Gammaproteobacteria</taxon>
        <taxon>Alteromonadales</taxon>
        <taxon>Shewanellaceae</taxon>
        <taxon>Shewanella</taxon>
    </lineage>
</organism>
<comment type="function">
    <text evidence="1">Catalyzes the prenylation of para-hydroxybenzoate (PHB) with an all-trans polyprenyl group. Mediates the second step in the final reaction sequence of ubiquinone-8 (UQ-8) biosynthesis, which is the condensation of the polyisoprenoid side chain with PHB, generating the first membrane-bound Q intermediate 3-octaprenyl-4-hydroxybenzoate.</text>
</comment>
<comment type="catalytic activity">
    <reaction evidence="1">
        <text>all-trans-octaprenyl diphosphate + 4-hydroxybenzoate = 4-hydroxy-3-(all-trans-octaprenyl)benzoate + diphosphate</text>
        <dbReference type="Rhea" id="RHEA:27782"/>
        <dbReference type="ChEBI" id="CHEBI:1617"/>
        <dbReference type="ChEBI" id="CHEBI:17879"/>
        <dbReference type="ChEBI" id="CHEBI:33019"/>
        <dbReference type="ChEBI" id="CHEBI:57711"/>
        <dbReference type="EC" id="2.5.1.39"/>
    </reaction>
</comment>
<comment type="cofactor">
    <cofactor evidence="1">
        <name>Mg(2+)</name>
        <dbReference type="ChEBI" id="CHEBI:18420"/>
    </cofactor>
</comment>
<comment type="pathway">
    <text evidence="1">Cofactor biosynthesis; ubiquinone biosynthesis.</text>
</comment>
<comment type="subcellular location">
    <subcellularLocation>
        <location evidence="1">Cell inner membrane</location>
        <topology evidence="1">Multi-pass membrane protein</topology>
    </subcellularLocation>
</comment>
<comment type="similarity">
    <text evidence="1">Belongs to the UbiA prenyltransferase family.</text>
</comment>